<name>SUB2_SCHPO</name>
<protein>
    <recommendedName>
        <fullName>ATP-dependent RNA helicase uap56</fullName>
        <ecNumber>3.6.4.13</ecNumber>
    </recommendedName>
</protein>
<dbReference type="EC" id="3.6.4.13"/>
<dbReference type="EMBL" id="CU329670">
    <property type="protein sequence ID" value="CAB16225.1"/>
    <property type="molecule type" value="Genomic_DNA"/>
</dbReference>
<dbReference type="EMBL" id="D89270">
    <property type="protein sequence ID" value="BAA13931.1"/>
    <property type="molecule type" value="mRNA"/>
</dbReference>
<dbReference type="PIR" id="T37846">
    <property type="entry name" value="T37846"/>
</dbReference>
<dbReference type="PIR" id="T43199">
    <property type="entry name" value="T43199"/>
</dbReference>
<dbReference type="RefSeq" id="NP_594261.1">
    <property type="nucleotide sequence ID" value="NM_001019684.2"/>
</dbReference>
<dbReference type="SMR" id="O13792"/>
<dbReference type="BioGRID" id="278895">
    <property type="interactions" value="13"/>
</dbReference>
<dbReference type="FunCoup" id="O13792">
    <property type="interactions" value="944"/>
</dbReference>
<dbReference type="IntAct" id="O13792">
    <property type="interactions" value="1"/>
</dbReference>
<dbReference type="STRING" id="284812.O13792"/>
<dbReference type="iPTMnet" id="O13792"/>
<dbReference type="PaxDb" id="4896-SPAC17G6.14c.1"/>
<dbReference type="EnsemblFungi" id="SPAC17G6.14c.1">
    <property type="protein sequence ID" value="SPAC17G6.14c.1:pep"/>
    <property type="gene ID" value="SPAC17G6.14c"/>
</dbReference>
<dbReference type="GeneID" id="2542433"/>
<dbReference type="KEGG" id="spo:2542433"/>
<dbReference type="PomBase" id="SPAC17G6.14c">
    <property type="gene designation" value="uap56"/>
</dbReference>
<dbReference type="VEuPathDB" id="FungiDB:SPAC17G6.14c"/>
<dbReference type="eggNOG" id="KOG0329">
    <property type="taxonomic scope" value="Eukaryota"/>
</dbReference>
<dbReference type="HOGENOM" id="CLU_003041_1_0_1"/>
<dbReference type="InParanoid" id="O13792"/>
<dbReference type="OMA" id="YAHVEPK"/>
<dbReference type="PhylomeDB" id="O13792"/>
<dbReference type="Reactome" id="R-SPO-72163">
    <property type="pathway name" value="mRNA Splicing - Major Pathway"/>
</dbReference>
<dbReference type="PRO" id="PR:O13792"/>
<dbReference type="Proteomes" id="UP000002485">
    <property type="component" value="Chromosome I"/>
</dbReference>
<dbReference type="GO" id="GO:0005634">
    <property type="term" value="C:nucleus"/>
    <property type="evidence" value="ECO:0000314"/>
    <property type="project" value="PomBase"/>
</dbReference>
<dbReference type="GO" id="GO:0000346">
    <property type="term" value="C:transcription export complex"/>
    <property type="evidence" value="ECO:0000266"/>
    <property type="project" value="PomBase"/>
</dbReference>
<dbReference type="GO" id="GO:0005524">
    <property type="term" value="F:ATP binding"/>
    <property type="evidence" value="ECO:0007669"/>
    <property type="project" value="UniProtKB-KW"/>
</dbReference>
<dbReference type="GO" id="GO:0016887">
    <property type="term" value="F:ATP hydrolysis activity"/>
    <property type="evidence" value="ECO:0007669"/>
    <property type="project" value="RHEA"/>
</dbReference>
<dbReference type="GO" id="GO:0003729">
    <property type="term" value="F:mRNA binding"/>
    <property type="evidence" value="ECO:0000318"/>
    <property type="project" value="GO_Central"/>
</dbReference>
<dbReference type="GO" id="GO:0003724">
    <property type="term" value="F:RNA helicase activity"/>
    <property type="evidence" value="ECO:0000316"/>
    <property type="project" value="PomBase"/>
</dbReference>
<dbReference type="GO" id="GO:0006406">
    <property type="term" value="P:mRNA export from nucleus"/>
    <property type="evidence" value="ECO:0000318"/>
    <property type="project" value="GO_Central"/>
</dbReference>
<dbReference type="GO" id="GO:0000398">
    <property type="term" value="P:mRNA splicing, via spliceosome"/>
    <property type="evidence" value="ECO:0000318"/>
    <property type="project" value="GO_Central"/>
</dbReference>
<dbReference type="CDD" id="cd17950">
    <property type="entry name" value="DEADc_DDX39"/>
    <property type="match status" value="1"/>
</dbReference>
<dbReference type="CDD" id="cd18787">
    <property type="entry name" value="SF2_C_DEAD"/>
    <property type="match status" value="1"/>
</dbReference>
<dbReference type="FunFam" id="3.40.50.300:FF:000809">
    <property type="entry name" value="ATP-dependent RNA helicase SUB2"/>
    <property type="match status" value="1"/>
</dbReference>
<dbReference type="FunFam" id="3.40.50.300:FF:000111">
    <property type="entry name" value="DEAD-box ATP-dependent RNA helicase"/>
    <property type="match status" value="1"/>
</dbReference>
<dbReference type="Gene3D" id="3.40.50.300">
    <property type="entry name" value="P-loop containing nucleotide triphosphate hydrolases"/>
    <property type="match status" value="2"/>
</dbReference>
<dbReference type="InterPro" id="IPR011545">
    <property type="entry name" value="DEAD/DEAH_box_helicase_dom"/>
</dbReference>
<dbReference type="InterPro" id="IPR014001">
    <property type="entry name" value="Helicase_ATP-bd"/>
</dbReference>
<dbReference type="InterPro" id="IPR001650">
    <property type="entry name" value="Helicase_C-like"/>
</dbReference>
<dbReference type="InterPro" id="IPR027417">
    <property type="entry name" value="P-loop_NTPase"/>
</dbReference>
<dbReference type="InterPro" id="IPR014014">
    <property type="entry name" value="RNA_helicase_DEAD_Q_motif"/>
</dbReference>
<dbReference type="PANTHER" id="PTHR47958">
    <property type="entry name" value="ATP-DEPENDENT RNA HELICASE DBP3"/>
    <property type="match status" value="1"/>
</dbReference>
<dbReference type="Pfam" id="PF00270">
    <property type="entry name" value="DEAD"/>
    <property type="match status" value="1"/>
</dbReference>
<dbReference type="Pfam" id="PF00271">
    <property type="entry name" value="Helicase_C"/>
    <property type="match status" value="1"/>
</dbReference>
<dbReference type="SMART" id="SM00487">
    <property type="entry name" value="DEXDc"/>
    <property type="match status" value="1"/>
</dbReference>
<dbReference type="SMART" id="SM00490">
    <property type="entry name" value="HELICc"/>
    <property type="match status" value="1"/>
</dbReference>
<dbReference type="SUPFAM" id="SSF52540">
    <property type="entry name" value="P-loop containing nucleoside triphosphate hydrolases"/>
    <property type="match status" value="1"/>
</dbReference>
<dbReference type="PROSITE" id="PS51192">
    <property type="entry name" value="HELICASE_ATP_BIND_1"/>
    <property type="match status" value="1"/>
</dbReference>
<dbReference type="PROSITE" id="PS51194">
    <property type="entry name" value="HELICASE_CTER"/>
    <property type="match status" value="1"/>
</dbReference>
<dbReference type="PROSITE" id="PS51195">
    <property type="entry name" value="Q_MOTIF"/>
    <property type="match status" value="1"/>
</dbReference>
<sequence length="434" mass="49231">MASAQEDLIDYEEEEELVQDQPAQEITPAADTAENGEKSDKKGSYVGIHSTGFRDFLLKPELLRAITDSGFEHPSEVQQVCIPQSILGTDVLCQAKSGMGKTAVFVLSTLQQIEPVDGEVSVLVLCHTRELAFQIKNEYARFSKYLPDVRTAVFYGGINIKQDMEAFKDKSKSPHIVVATPGRLNALVREKILKVNSVKHFVLDECDKLLESVDMRRDIQEVFRATPPQKQVMMFSATLSNEIRPICKKFMQNPLEIYVDDETKLTLHGLQQHYVKLEEKAKNRKINDLLDSLEFNQVVIFVKSVSRANELDRLLRECNFPSICIHGGLPQEERIKRYKAFKDFDKRICVATDVFGRGIDIERVNIVINYDMPDSPDSYLHRVGRAGRFGTKGLAITFSSSEEDSQILDKIQERFEVNITELPDEIDVGSYMNA</sequence>
<accession>O13792</accession>
<accession>P78919</accession>
<reference key="1">
    <citation type="journal article" date="2002" name="Nature">
        <title>The genome sequence of Schizosaccharomyces pombe.</title>
        <authorList>
            <person name="Wood V."/>
            <person name="Gwilliam R."/>
            <person name="Rajandream M.A."/>
            <person name="Lyne M.H."/>
            <person name="Lyne R."/>
            <person name="Stewart A."/>
            <person name="Sgouros J.G."/>
            <person name="Peat N."/>
            <person name="Hayles J."/>
            <person name="Baker S.G."/>
            <person name="Basham D."/>
            <person name="Bowman S."/>
            <person name="Brooks K."/>
            <person name="Brown D."/>
            <person name="Brown S."/>
            <person name="Chillingworth T."/>
            <person name="Churcher C.M."/>
            <person name="Collins M."/>
            <person name="Connor R."/>
            <person name="Cronin A."/>
            <person name="Davis P."/>
            <person name="Feltwell T."/>
            <person name="Fraser A."/>
            <person name="Gentles S."/>
            <person name="Goble A."/>
            <person name="Hamlin N."/>
            <person name="Harris D.E."/>
            <person name="Hidalgo J."/>
            <person name="Hodgson G."/>
            <person name="Holroyd S."/>
            <person name="Hornsby T."/>
            <person name="Howarth S."/>
            <person name="Huckle E.J."/>
            <person name="Hunt S."/>
            <person name="Jagels K."/>
            <person name="James K.D."/>
            <person name="Jones L."/>
            <person name="Jones M."/>
            <person name="Leather S."/>
            <person name="McDonald S."/>
            <person name="McLean J."/>
            <person name="Mooney P."/>
            <person name="Moule S."/>
            <person name="Mungall K.L."/>
            <person name="Murphy L.D."/>
            <person name="Niblett D."/>
            <person name="Odell C."/>
            <person name="Oliver K."/>
            <person name="O'Neil S."/>
            <person name="Pearson D."/>
            <person name="Quail M.A."/>
            <person name="Rabbinowitsch E."/>
            <person name="Rutherford K.M."/>
            <person name="Rutter S."/>
            <person name="Saunders D."/>
            <person name="Seeger K."/>
            <person name="Sharp S."/>
            <person name="Skelton J."/>
            <person name="Simmonds M.N."/>
            <person name="Squares R."/>
            <person name="Squares S."/>
            <person name="Stevens K."/>
            <person name="Taylor K."/>
            <person name="Taylor R.G."/>
            <person name="Tivey A."/>
            <person name="Walsh S.V."/>
            <person name="Warren T."/>
            <person name="Whitehead S."/>
            <person name="Woodward J.R."/>
            <person name="Volckaert G."/>
            <person name="Aert R."/>
            <person name="Robben J."/>
            <person name="Grymonprez B."/>
            <person name="Weltjens I."/>
            <person name="Vanstreels E."/>
            <person name="Rieger M."/>
            <person name="Schaefer M."/>
            <person name="Mueller-Auer S."/>
            <person name="Gabel C."/>
            <person name="Fuchs M."/>
            <person name="Duesterhoeft A."/>
            <person name="Fritzc C."/>
            <person name="Holzer E."/>
            <person name="Moestl D."/>
            <person name="Hilbert H."/>
            <person name="Borzym K."/>
            <person name="Langer I."/>
            <person name="Beck A."/>
            <person name="Lehrach H."/>
            <person name="Reinhardt R."/>
            <person name="Pohl T.M."/>
            <person name="Eger P."/>
            <person name="Zimmermann W."/>
            <person name="Wedler H."/>
            <person name="Wambutt R."/>
            <person name="Purnelle B."/>
            <person name="Goffeau A."/>
            <person name="Cadieu E."/>
            <person name="Dreano S."/>
            <person name="Gloux S."/>
            <person name="Lelaure V."/>
            <person name="Mottier S."/>
            <person name="Galibert F."/>
            <person name="Aves S.J."/>
            <person name="Xiang Z."/>
            <person name="Hunt C."/>
            <person name="Moore K."/>
            <person name="Hurst S.M."/>
            <person name="Lucas M."/>
            <person name="Rochet M."/>
            <person name="Gaillardin C."/>
            <person name="Tallada V.A."/>
            <person name="Garzon A."/>
            <person name="Thode G."/>
            <person name="Daga R.R."/>
            <person name="Cruzado L."/>
            <person name="Jimenez J."/>
            <person name="Sanchez M."/>
            <person name="del Rey F."/>
            <person name="Benito J."/>
            <person name="Dominguez A."/>
            <person name="Revuelta J.L."/>
            <person name="Moreno S."/>
            <person name="Armstrong J."/>
            <person name="Forsburg S.L."/>
            <person name="Cerutti L."/>
            <person name="Lowe T."/>
            <person name="McCombie W.R."/>
            <person name="Paulsen I."/>
            <person name="Potashkin J."/>
            <person name="Shpakovski G.V."/>
            <person name="Ussery D."/>
            <person name="Barrell B.G."/>
            <person name="Nurse P."/>
        </authorList>
    </citation>
    <scope>NUCLEOTIDE SEQUENCE [LARGE SCALE GENOMIC DNA]</scope>
    <source>
        <strain>972 / ATCC 24843</strain>
    </source>
</reference>
<reference key="2">
    <citation type="journal article" date="1997" name="DNA Res.">
        <title>Identification of open reading frames in Schizosaccharomyces pombe cDNAs.</title>
        <authorList>
            <person name="Yoshioka S."/>
            <person name="Kato K."/>
            <person name="Nakai K."/>
            <person name="Okayama H."/>
            <person name="Nojima H."/>
        </authorList>
    </citation>
    <scope>NUCLEOTIDE SEQUENCE [LARGE SCALE MRNA] OF 96-434</scope>
    <source>
        <strain>PR745</strain>
    </source>
</reference>
<reference key="3">
    <citation type="journal article" date="2001" name="Genes Dev.">
        <title>Multiple roles for the yeast SUB2/yUAP56 gene in splicing.</title>
        <authorList>
            <person name="Libri D."/>
            <person name="Graziani N."/>
            <person name="Saguez C."/>
            <person name="Boulay J."/>
        </authorList>
    </citation>
    <scope>FUNCTION</scope>
</reference>
<reference key="4">
    <citation type="journal article" date="2005" name="EMBO J.">
        <title>Homolog of BRCA2-interacting Dss1p and Uap56p link Mlo3p and Rae1p for mRNA export in fission yeast.</title>
        <authorList>
            <person name="Thakurta A.G."/>
            <person name="Gopal G."/>
            <person name="Yoon J.H."/>
            <person name="Kozak L."/>
            <person name="Dhar R."/>
        </authorList>
    </citation>
    <scope>FUNCTION</scope>
    <scope>INTERACTION WITH MLO3 AND RAE1</scope>
    <scope>SUBCELLULAR LOCATION</scope>
</reference>
<organism>
    <name type="scientific">Schizosaccharomyces pombe (strain 972 / ATCC 24843)</name>
    <name type="common">Fission yeast</name>
    <dbReference type="NCBI Taxonomy" id="284812"/>
    <lineage>
        <taxon>Eukaryota</taxon>
        <taxon>Fungi</taxon>
        <taxon>Dikarya</taxon>
        <taxon>Ascomycota</taxon>
        <taxon>Taphrinomycotina</taxon>
        <taxon>Schizosaccharomycetes</taxon>
        <taxon>Schizosaccharomycetales</taxon>
        <taxon>Schizosaccharomycetaceae</taxon>
        <taxon>Schizosaccharomyces</taxon>
    </lineage>
</organism>
<proteinExistence type="evidence at protein level"/>
<gene>
    <name type="primary">uap56</name>
    <name type="synonym">sub2</name>
    <name type="ORF">SPAC17G6.14c</name>
</gene>
<evidence type="ECO:0000255" key="1">
    <source>
        <dbReference type="PROSITE-ProRule" id="PRU00541"/>
    </source>
</evidence>
<evidence type="ECO:0000255" key="2">
    <source>
        <dbReference type="PROSITE-ProRule" id="PRU00542"/>
    </source>
</evidence>
<evidence type="ECO:0000256" key="3">
    <source>
        <dbReference type="SAM" id="MobiDB-lite"/>
    </source>
</evidence>
<evidence type="ECO:0000269" key="4">
    <source>
    </source>
</evidence>
<evidence type="ECO:0000269" key="5">
    <source>
    </source>
</evidence>
<evidence type="ECO:0000305" key="6"/>
<keyword id="KW-0067">ATP-binding</keyword>
<keyword id="KW-0347">Helicase</keyword>
<keyword id="KW-0378">Hydrolase</keyword>
<keyword id="KW-0509">mRNA transport</keyword>
<keyword id="KW-0547">Nucleotide-binding</keyword>
<keyword id="KW-0539">Nucleus</keyword>
<keyword id="KW-1185">Reference proteome</keyword>
<keyword id="KW-0694">RNA-binding</keyword>
<keyword id="KW-0813">Transport</keyword>
<comment type="function">
    <text evidence="4 5">ATP-binding RNA helicase involved in transcription elongation and required for the export of mRNA out of the nucleus. SUB2 also plays a role in pre-mRNA splicing and spliceosome assembly. May be involved in rDNA and telomeric silencing, and maintenance of genome integrity. Links the mRNA adapter mlo3 to rae1 for targeting mRNA-protein complex to the proteins of the nucleoporin complex (NPC).</text>
</comment>
<comment type="catalytic activity">
    <reaction>
        <text>ATP + H2O = ADP + phosphate + H(+)</text>
        <dbReference type="Rhea" id="RHEA:13065"/>
        <dbReference type="ChEBI" id="CHEBI:15377"/>
        <dbReference type="ChEBI" id="CHEBI:15378"/>
        <dbReference type="ChEBI" id="CHEBI:30616"/>
        <dbReference type="ChEBI" id="CHEBI:43474"/>
        <dbReference type="ChEBI" id="CHEBI:456216"/>
        <dbReference type="EC" id="3.6.4.13"/>
    </reaction>
</comment>
<comment type="subunit">
    <text evidence="5">Interacts with mlo3 and rae1.</text>
</comment>
<comment type="subcellular location">
    <subcellularLocation>
        <location evidence="5">Nucleus</location>
    </subcellularLocation>
</comment>
<comment type="domain">
    <text>The Q motif is unique to and characteristic of the DEAD box family of RNA helicases and controls ATP binding and hydrolysis.</text>
</comment>
<comment type="similarity">
    <text evidence="6">Belongs to the DEAD box helicase family. DECD subfamily.</text>
</comment>
<feature type="chain" id="PRO_0000055081" description="ATP-dependent RNA helicase uap56">
    <location>
        <begin position="1"/>
        <end position="434"/>
    </location>
</feature>
<feature type="domain" description="Helicase ATP-binding" evidence="1">
    <location>
        <begin position="82"/>
        <end position="257"/>
    </location>
</feature>
<feature type="domain" description="Helicase C-terminal" evidence="2">
    <location>
        <begin position="269"/>
        <end position="430"/>
    </location>
</feature>
<feature type="region of interest" description="Disordered" evidence="3">
    <location>
        <begin position="1"/>
        <end position="43"/>
    </location>
</feature>
<feature type="short sequence motif" description="Q motif">
    <location>
        <begin position="51"/>
        <end position="79"/>
    </location>
</feature>
<feature type="short sequence motif" description="DECD box">
    <location>
        <begin position="204"/>
        <end position="207"/>
    </location>
</feature>
<feature type="compositionally biased region" description="Acidic residues" evidence="3">
    <location>
        <begin position="7"/>
        <end position="18"/>
    </location>
</feature>
<feature type="binding site" evidence="1">
    <location>
        <begin position="95"/>
        <end position="102"/>
    </location>
    <ligand>
        <name>ATP</name>
        <dbReference type="ChEBI" id="CHEBI:30616"/>
    </ligand>
</feature>
<feature type="sequence conflict" description="In Ref. 2; BAA13931." evidence="6" ref="2">
    <original>I</original>
    <variation>N</variation>
    <location>
        <position position="192"/>
    </location>
</feature>